<proteinExistence type="inferred from homology"/>
<organism>
    <name type="scientific">Herminiimonas arsenicoxydans</name>
    <dbReference type="NCBI Taxonomy" id="204773"/>
    <lineage>
        <taxon>Bacteria</taxon>
        <taxon>Pseudomonadati</taxon>
        <taxon>Pseudomonadota</taxon>
        <taxon>Betaproteobacteria</taxon>
        <taxon>Burkholderiales</taxon>
        <taxon>Oxalobacteraceae</taxon>
        <taxon>Herminiimonas</taxon>
    </lineage>
</organism>
<keyword id="KW-0028">Amino-acid biosynthesis</keyword>
<keyword id="KW-0057">Aromatic amino acid biosynthesis</keyword>
<keyword id="KW-0328">Glycosyltransferase</keyword>
<keyword id="KW-0460">Magnesium</keyword>
<keyword id="KW-0479">Metal-binding</keyword>
<keyword id="KW-1185">Reference proteome</keyword>
<keyword id="KW-0808">Transferase</keyword>
<keyword id="KW-0822">Tryptophan biosynthesis</keyword>
<accession>A4G1P5</accession>
<comment type="function">
    <text evidence="1">Catalyzes the transfer of the phosphoribosyl group of 5-phosphorylribose-1-pyrophosphate (PRPP) to anthranilate to yield N-(5'-phosphoribosyl)-anthranilate (PRA).</text>
</comment>
<comment type="catalytic activity">
    <reaction evidence="1">
        <text>N-(5-phospho-beta-D-ribosyl)anthranilate + diphosphate = 5-phospho-alpha-D-ribose 1-diphosphate + anthranilate</text>
        <dbReference type="Rhea" id="RHEA:11768"/>
        <dbReference type="ChEBI" id="CHEBI:16567"/>
        <dbReference type="ChEBI" id="CHEBI:18277"/>
        <dbReference type="ChEBI" id="CHEBI:33019"/>
        <dbReference type="ChEBI" id="CHEBI:58017"/>
        <dbReference type="EC" id="2.4.2.18"/>
    </reaction>
</comment>
<comment type="cofactor">
    <cofactor evidence="1">
        <name>Mg(2+)</name>
        <dbReference type="ChEBI" id="CHEBI:18420"/>
    </cofactor>
    <text evidence="1">Binds 2 magnesium ions per monomer.</text>
</comment>
<comment type="pathway">
    <text evidence="1">Amino-acid biosynthesis; L-tryptophan biosynthesis; L-tryptophan from chorismate: step 2/5.</text>
</comment>
<comment type="subunit">
    <text evidence="1">Homodimer.</text>
</comment>
<comment type="similarity">
    <text evidence="1">Belongs to the anthranilate phosphoribosyltransferase family.</text>
</comment>
<evidence type="ECO:0000255" key="1">
    <source>
        <dbReference type="HAMAP-Rule" id="MF_00211"/>
    </source>
</evidence>
<protein>
    <recommendedName>
        <fullName evidence="1">Anthranilate phosphoribosyltransferase</fullName>
        <ecNumber evidence="1">2.4.2.18</ecNumber>
    </recommendedName>
</protein>
<dbReference type="EC" id="2.4.2.18" evidence="1"/>
<dbReference type="EMBL" id="CU207211">
    <property type="protein sequence ID" value="CAL60432.1"/>
    <property type="molecule type" value="Genomic_DNA"/>
</dbReference>
<dbReference type="SMR" id="A4G1P5"/>
<dbReference type="STRING" id="204773.HEAR0198"/>
<dbReference type="KEGG" id="har:HEAR0198"/>
<dbReference type="eggNOG" id="COG0547">
    <property type="taxonomic scope" value="Bacteria"/>
</dbReference>
<dbReference type="HOGENOM" id="CLU_034315_2_1_4"/>
<dbReference type="OrthoDB" id="9806430at2"/>
<dbReference type="UniPathway" id="UPA00035">
    <property type="reaction ID" value="UER00041"/>
</dbReference>
<dbReference type="Proteomes" id="UP000006697">
    <property type="component" value="Chromosome"/>
</dbReference>
<dbReference type="GO" id="GO:0005829">
    <property type="term" value="C:cytosol"/>
    <property type="evidence" value="ECO:0007669"/>
    <property type="project" value="TreeGrafter"/>
</dbReference>
<dbReference type="GO" id="GO:0004048">
    <property type="term" value="F:anthranilate phosphoribosyltransferase activity"/>
    <property type="evidence" value="ECO:0007669"/>
    <property type="project" value="UniProtKB-UniRule"/>
</dbReference>
<dbReference type="GO" id="GO:0000287">
    <property type="term" value="F:magnesium ion binding"/>
    <property type="evidence" value="ECO:0007669"/>
    <property type="project" value="UniProtKB-UniRule"/>
</dbReference>
<dbReference type="GO" id="GO:0000162">
    <property type="term" value="P:L-tryptophan biosynthetic process"/>
    <property type="evidence" value="ECO:0007669"/>
    <property type="project" value="UniProtKB-UniRule"/>
</dbReference>
<dbReference type="FunFam" id="3.40.1030.10:FF:000002">
    <property type="entry name" value="Anthranilate phosphoribosyltransferase"/>
    <property type="match status" value="1"/>
</dbReference>
<dbReference type="Gene3D" id="3.40.1030.10">
    <property type="entry name" value="Nucleoside phosphorylase/phosphoribosyltransferase catalytic domain"/>
    <property type="match status" value="1"/>
</dbReference>
<dbReference type="Gene3D" id="1.20.970.10">
    <property type="entry name" value="Transferase, Pyrimidine Nucleoside Phosphorylase, Chain C"/>
    <property type="match status" value="1"/>
</dbReference>
<dbReference type="HAMAP" id="MF_00211">
    <property type="entry name" value="TrpD"/>
    <property type="match status" value="1"/>
</dbReference>
<dbReference type="InterPro" id="IPR005940">
    <property type="entry name" value="Anthranilate_Pribosyl_Tfrase"/>
</dbReference>
<dbReference type="InterPro" id="IPR000312">
    <property type="entry name" value="Glycosyl_Trfase_fam3"/>
</dbReference>
<dbReference type="InterPro" id="IPR017459">
    <property type="entry name" value="Glycosyl_Trfase_fam3_N_dom"/>
</dbReference>
<dbReference type="InterPro" id="IPR036320">
    <property type="entry name" value="Glycosyl_Trfase_fam3_N_dom_sf"/>
</dbReference>
<dbReference type="InterPro" id="IPR035902">
    <property type="entry name" value="Nuc_phospho_transferase"/>
</dbReference>
<dbReference type="NCBIfam" id="TIGR01245">
    <property type="entry name" value="trpD"/>
    <property type="match status" value="1"/>
</dbReference>
<dbReference type="PANTHER" id="PTHR43285">
    <property type="entry name" value="ANTHRANILATE PHOSPHORIBOSYLTRANSFERASE"/>
    <property type="match status" value="1"/>
</dbReference>
<dbReference type="PANTHER" id="PTHR43285:SF2">
    <property type="entry name" value="ANTHRANILATE PHOSPHORIBOSYLTRANSFERASE"/>
    <property type="match status" value="1"/>
</dbReference>
<dbReference type="Pfam" id="PF02885">
    <property type="entry name" value="Glycos_trans_3N"/>
    <property type="match status" value="1"/>
</dbReference>
<dbReference type="Pfam" id="PF00591">
    <property type="entry name" value="Glycos_transf_3"/>
    <property type="match status" value="1"/>
</dbReference>
<dbReference type="SUPFAM" id="SSF52418">
    <property type="entry name" value="Nucleoside phosphorylase/phosphoribosyltransferase catalytic domain"/>
    <property type="match status" value="1"/>
</dbReference>
<dbReference type="SUPFAM" id="SSF47648">
    <property type="entry name" value="Nucleoside phosphorylase/phosphoribosyltransferase N-terminal domain"/>
    <property type="match status" value="1"/>
</dbReference>
<sequence>MQITDQEALLRCIEHREIFHDEMLTLFRRIMSGEMSPVMMAAIITGLRVKKESIGEITAAAEVMREFATKVPLTDTTNLLDIVGTGGDGANTFNISTASMFVAAAAGARIAKHGGRSVSSSSGSADALDALGANINLKPELVAESIAQTGIGFMFAPNHHAAMKHAAAVRKELGVRTIFNILGPLTNPAGAPNILMGVFHPDLVGIQVRVLQRLGAQHAIVVWGRDNMDEVSLGAATMVGELIDGKIREYEIHPEDFGLPMIASRNLRVANAAESKTRILEVLANTAGPARDIVTLNAGTALYAAGVASSISAGLQLAREAIASGAARAKMEQFVRVTQELGSKA</sequence>
<gene>
    <name evidence="1" type="primary">trpD</name>
    <name type="ordered locus">HEAR0198</name>
</gene>
<feature type="chain" id="PRO_1000043015" description="Anthranilate phosphoribosyltransferase">
    <location>
        <begin position="1"/>
        <end position="345"/>
    </location>
</feature>
<feature type="binding site" evidence="1">
    <location>
        <position position="84"/>
    </location>
    <ligand>
        <name>5-phospho-alpha-D-ribose 1-diphosphate</name>
        <dbReference type="ChEBI" id="CHEBI:58017"/>
    </ligand>
</feature>
<feature type="binding site" evidence="1">
    <location>
        <position position="84"/>
    </location>
    <ligand>
        <name>anthranilate</name>
        <dbReference type="ChEBI" id="CHEBI:16567"/>
        <label>1</label>
    </ligand>
</feature>
<feature type="binding site" evidence="1">
    <location>
        <begin position="87"/>
        <end position="88"/>
    </location>
    <ligand>
        <name>5-phospho-alpha-D-ribose 1-diphosphate</name>
        <dbReference type="ChEBI" id="CHEBI:58017"/>
    </ligand>
</feature>
<feature type="binding site" evidence="1">
    <location>
        <position position="92"/>
    </location>
    <ligand>
        <name>5-phospho-alpha-D-ribose 1-diphosphate</name>
        <dbReference type="ChEBI" id="CHEBI:58017"/>
    </ligand>
</feature>
<feature type="binding site" evidence="1">
    <location>
        <begin position="94"/>
        <end position="97"/>
    </location>
    <ligand>
        <name>5-phospho-alpha-D-ribose 1-diphosphate</name>
        <dbReference type="ChEBI" id="CHEBI:58017"/>
    </ligand>
</feature>
<feature type="binding site" evidence="1">
    <location>
        <position position="96"/>
    </location>
    <ligand>
        <name>Mg(2+)</name>
        <dbReference type="ChEBI" id="CHEBI:18420"/>
        <label>1</label>
    </ligand>
</feature>
<feature type="binding site" evidence="1">
    <location>
        <begin position="112"/>
        <end position="120"/>
    </location>
    <ligand>
        <name>5-phospho-alpha-D-ribose 1-diphosphate</name>
        <dbReference type="ChEBI" id="CHEBI:58017"/>
    </ligand>
</feature>
<feature type="binding site" evidence="1">
    <location>
        <position position="124"/>
    </location>
    <ligand>
        <name>5-phospho-alpha-D-ribose 1-diphosphate</name>
        <dbReference type="ChEBI" id="CHEBI:58017"/>
    </ligand>
</feature>
<feature type="binding site" evidence="1">
    <location>
        <position position="170"/>
    </location>
    <ligand>
        <name>anthranilate</name>
        <dbReference type="ChEBI" id="CHEBI:16567"/>
        <label>2</label>
    </ligand>
</feature>
<feature type="binding site" evidence="1">
    <location>
        <position position="229"/>
    </location>
    <ligand>
        <name>Mg(2+)</name>
        <dbReference type="ChEBI" id="CHEBI:18420"/>
        <label>2</label>
    </ligand>
</feature>
<feature type="binding site" evidence="1">
    <location>
        <position position="230"/>
    </location>
    <ligand>
        <name>Mg(2+)</name>
        <dbReference type="ChEBI" id="CHEBI:18420"/>
        <label>1</label>
    </ligand>
</feature>
<feature type="binding site" evidence="1">
    <location>
        <position position="230"/>
    </location>
    <ligand>
        <name>Mg(2+)</name>
        <dbReference type="ChEBI" id="CHEBI:18420"/>
        <label>2</label>
    </ligand>
</feature>
<name>TRPD_HERAR</name>
<reference key="1">
    <citation type="journal article" date="2007" name="PLoS Genet.">
        <title>A tale of two oxidation states: bacterial colonization of arsenic-rich environments.</title>
        <authorList>
            <person name="Muller D."/>
            <person name="Medigue C."/>
            <person name="Koechler S."/>
            <person name="Barbe V."/>
            <person name="Barakat M."/>
            <person name="Talla E."/>
            <person name="Bonnefoy V."/>
            <person name="Krin E."/>
            <person name="Arsene-Ploetze F."/>
            <person name="Carapito C."/>
            <person name="Chandler M."/>
            <person name="Cournoyer B."/>
            <person name="Cruveiller S."/>
            <person name="Dossat C."/>
            <person name="Duval S."/>
            <person name="Heymann M."/>
            <person name="Leize E."/>
            <person name="Lieutaud A."/>
            <person name="Lievremont D."/>
            <person name="Makita Y."/>
            <person name="Mangenot S."/>
            <person name="Nitschke W."/>
            <person name="Ortet P."/>
            <person name="Perdrial N."/>
            <person name="Schoepp B."/>
            <person name="Siguier P."/>
            <person name="Simeonova D.D."/>
            <person name="Rouy Z."/>
            <person name="Segurens B."/>
            <person name="Turlin E."/>
            <person name="Vallenet D."/>
            <person name="van Dorsselaer A."/>
            <person name="Weiss S."/>
            <person name="Weissenbach J."/>
            <person name="Lett M.-C."/>
            <person name="Danchin A."/>
            <person name="Bertin P.N."/>
        </authorList>
    </citation>
    <scope>NUCLEOTIDE SEQUENCE [LARGE SCALE GENOMIC DNA]</scope>
    <source>
        <strain>ULPAs1</strain>
    </source>
</reference>